<proteinExistence type="inferred from homology"/>
<sequence length="428" mass="45707">MSKSDQLFEQARQTIPGGVNSPVRAFNGVGGTPRFIDHADGAYLYDVDGQAYVDYIGSWGPMLLGHNHPAIKAAVIKAVEKGLSYGAPTEIEVLMAEKVRQIVPSMEQVRMVNSGTEATMSAIRLARGYTGRDKIVKFEGCYHGHADSLLVKAGSGALTLGQPNSPGVPADFAKHTLTCVFNDLDSVCEAFTQYGSEIACIIVEPVAGNMNCIPPVPGFLEGLRAICDEAGALLILDEVMTGFRVSLRGAQGHYNIDPDLTTLGKIIGAGMPVGAFGGKKKVMQHIAPTGPVYQAGTLSGNPVAMAAGLTMLDLLLEPGLYEQLSAKTARVAEGLKAAAAKHGIPLAINYVGGMFGFFFTDEPEVTRYEQVTRCDMERFKRFYHLMLEEGVYLAPSAYEAGFLSLAHGDKEIEHTLAAAERSFAKLAG</sequence>
<evidence type="ECO:0000255" key="1">
    <source>
        <dbReference type="HAMAP-Rule" id="MF_00375"/>
    </source>
</evidence>
<name>GSA_AERHH</name>
<keyword id="KW-0963">Cytoplasm</keyword>
<keyword id="KW-0413">Isomerase</keyword>
<keyword id="KW-0627">Porphyrin biosynthesis</keyword>
<keyword id="KW-0663">Pyridoxal phosphate</keyword>
<keyword id="KW-1185">Reference proteome</keyword>
<comment type="catalytic activity">
    <reaction evidence="1">
        <text>(S)-4-amino-5-oxopentanoate = 5-aminolevulinate</text>
        <dbReference type="Rhea" id="RHEA:14265"/>
        <dbReference type="ChEBI" id="CHEBI:57501"/>
        <dbReference type="ChEBI" id="CHEBI:356416"/>
        <dbReference type="EC" id="5.4.3.8"/>
    </reaction>
</comment>
<comment type="cofactor">
    <cofactor evidence="1">
        <name>pyridoxal 5'-phosphate</name>
        <dbReference type="ChEBI" id="CHEBI:597326"/>
    </cofactor>
</comment>
<comment type="pathway">
    <text evidence="1">Porphyrin-containing compound metabolism; protoporphyrin-IX biosynthesis; 5-aminolevulinate from L-glutamyl-tRNA(Glu): step 2/2.</text>
</comment>
<comment type="subunit">
    <text evidence="1">Homodimer.</text>
</comment>
<comment type="subcellular location">
    <subcellularLocation>
        <location evidence="1">Cytoplasm</location>
    </subcellularLocation>
</comment>
<comment type="similarity">
    <text evidence="1">Belongs to the class-III pyridoxal-phosphate-dependent aminotransferase family. HemL subfamily.</text>
</comment>
<protein>
    <recommendedName>
        <fullName evidence="1">Glutamate-1-semialdehyde 2,1-aminomutase</fullName>
        <shortName evidence="1">GSA</shortName>
        <ecNumber evidence="1">5.4.3.8</ecNumber>
    </recommendedName>
    <alternativeName>
        <fullName evidence="1">Glutamate-1-semialdehyde aminotransferase</fullName>
        <shortName evidence="1">GSA-AT</shortName>
    </alternativeName>
</protein>
<accession>A0KNY9</accession>
<dbReference type="EC" id="5.4.3.8" evidence="1"/>
<dbReference type="EMBL" id="CP000462">
    <property type="protein sequence ID" value="ABK38090.1"/>
    <property type="molecule type" value="Genomic_DNA"/>
</dbReference>
<dbReference type="RefSeq" id="WP_011707264.1">
    <property type="nucleotide sequence ID" value="NC_008570.1"/>
</dbReference>
<dbReference type="RefSeq" id="YP_857990.1">
    <property type="nucleotide sequence ID" value="NC_008570.1"/>
</dbReference>
<dbReference type="SMR" id="A0KNY9"/>
<dbReference type="STRING" id="380703.AHA_3520"/>
<dbReference type="EnsemblBacteria" id="ABK38090">
    <property type="protein sequence ID" value="ABK38090"/>
    <property type="gene ID" value="AHA_3520"/>
</dbReference>
<dbReference type="GeneID" id="4488496"/>
<dbReference type="KEGG" id="aha:AHA_3520"/>
<dbReference type="PATRIC" id="fig|380703.7.peg.3504"/>
<dbReference type="eggNOG" id="COG0001">
    <property type="taxonomic scope" value="Bacteria"/>
</dbReference>
<dbReference type="HOGENOM" id="CLU_016922_1_5_6"/>
<dbReference type="OrthoDB" id="9801052at2"/>
<dbReference type="UniPathway" id="UPA00251">
    <property type="reaction ID" value="UER00317"/>
</dbReference>
<dbReference type="Proteomes" id="UP000000756">
    <property type="component" value="Chromosome"/>
</dbReference>
<dbReference type="GO" id="GO:0005737">
    <property type="term" value="C:cytoplasm"/>
    <property type="evidence" value="ECO:0007669"/>
    <property type="project" value="UniProtKB-SubCell"/>
</dbReference>
<dbReference type="GO" id="GO:0042286">
    <property type="term" value="F:glutamate-1-semialdehyde 2,1-aminomutase activity"/>
    <property type="evidence" value="ECO:0007669"/>
    <property type="project" value="UniProtKB-UniRule"/>
</dbReference>
<dbReference type="GO" id="GO:0030170">
    <property type="term" value="F:pyridoxal phosphate binding"/>
    <property type="evidence" value="ECO:0007669"/>
    <property type="project" value="InterPro"/>
</dbReference>
<dbReference type="GO" id="GO:0008483">
    <property type="term" value="F:transaminase activity"/>
    <property type="evidence" value="ECO:0007669"/>
    <property type="project" value="InterPro"/>
</dbReference>
<dbReference type="GO" id="GO:0006782">
    <property type="term" value="P:protoporphyrinogen IX biosynthetic process"/>
    <property type="evidence" value="ECO:0007669"/>
    <property type="project" value="UniProtKB-UniRule"/>
</dbReference>
<dbReference type="CDD" id="cd00610">
    <property type="entry name" value="OAT_like"/>
    <property type="match status" value="1"/>
</dbReference>
<dbReference type="FunFam" id="3.40.640.10:FF:000021">
    <property type="entry name" value="Glutamate-1-semialdehyde 2,1-aminomutase"/>
    <property type="match status" value="1"/>
</dbReference>
<dbReference type="FunFam" id="3.90.1150.10:FF:000012">
    <property type="entry name" value="Glutamate-1-semialdehyde 2,1-aminomutase"/>
    <property type="match status" value="1"/>
</dbReference>
<dbReference type="Gene3D" id="3.90.1150.10">
    <property type="entry name" value="Aspartate Aminotransferase, domain 1"/>
    <property type="match status" value="1"/>
</dbReference>
<dbReference type="Gene3D" id="3.40.640.10">
    <property type="entry name" value="Type I PLP-dependent aspartate aminotransferase-like (Major domain)"/>
    <property type="match status" value="1"/>
</dbReference>
<dbReference type="HAMAP" id="MF_00375">
    <property type="entry name" value="HemL_aminotrans_3"/>
    <property type="match status" value="1"/>
</dbReference>
<dbReference type="InterPro" id="IPR004639">
    <property type="entry name" value="4pyrrol_synth_GluAld_NH2Trfase"/>
</dbReference>
<dbReference type="InterPro" id="IPR005814">
    <property type="entry name" value="Aminotrans_3"/>
</dbReference>
<dbReference type="InterPro" id="IPR049704">
    <property type="entry name" value="Aminotrans_3_PPA_site"/>
</dbReference>
<dbReference type="InterPro" id="IPR015424">
    <property type="entry name" value="PyrdxlP-dep_Trfase"/>
</dbReference>
<dbReference type="InterPro" id="IPR015421">
    <property type="entry name" value="PyrdxlP-dep_Trfase_major"/>
</dbReference>
<dbReference type="InterPro" id="IPR015422">
    <property type="entry name" value="PyrdxlP-dep_Trfase_small"/>
</dbReference>
<dbReference type="NCBIfam" id="TIGR00713">
    <property type="entry name" value="hemL"/>
    <property type="match status" value="1"/>
</dbReference>
<dbReference type="NCBIfam" id="NF000818">
    <property type="entry name" value="PRK00062.1"/>
    <property type="match status" value="1"/>
</dbReference>
<dbReference type="PANTHER" id="PTHR43713">
    <property type="entry name" value="GLUTAMATE-1-SEMIALDEHYDE 2,1-AMINOMUTASE"/>
    <property type="match status" value="1"/>
</dbReference>
<dbReference type="PANTHER" id="PTHR43713:SF3">
    <property type="entry name" value="GLUTAMATE-1-SEMIALDEHYDE 2,1-AMINOMUTASE 1, CHLOROPLASTIC-RELATED"/>
    <property type="match status" value="1"/>
</dbReference>
<dbReference type="Pfam" id="PF00202">
    <property type="entry name" value="Aminotran_3"/>
    <property type="match status" value="1"/>
</dbReference>
<dbReference type="SUPFAM" id="SSF53383">
    <property type="entry name" value="PLP-dependent transferases"/>
    <property type="match status" value="1"/>
</dbReference>
<dbReference type="PROSITE" id="PS00600">
    <property type="entry name" value="AA_TRANSFER_CLASS_3"/>
    <property type="match status" value="1"/>
</dbReference>
<organism>
    <name type="scientific">Aeromonas hydrophila subsp. hydrophila (strain ATCC 7966 / DSM 30187 / BCRC 13018 / CCUG 14551 / JCM 1027 / KCTC 2358 / NCIMB 9240 / NCTC 8049)</name>
    <dbReference type="NCBI Taxonomy" id="380703"/>
    <lineage>
        <taxon>Bacteria</taxon>
        <taxon>Pseudomonadati</taxon>
        <taxon>Pseudomonadota</taxon>
        <taxon>Gammaproteobacteria</taxon>
        <taxon>Aeromonadales</taxon>
        <taxon>Aeromonadaceae</taxon>
        <taxon>Aeromonas</taxon>
    </lineage>
</organism>
<feature type="chain" id="PRO_0000300890" description="Glutamate-1-semialdehyde 2,1-aminomutase">
    <location>
        <begin position="1"/>
        <end position="428"/>
    </location>
</feature>
<feature type="modified residue" description="N6-(pyridoxal phosphate)lysine" evidence="1">
    <location>
        <position position="265"/>
    </location>
</feature>
<gene>
    <name evidence="1" type="primary">hemL</name>
    <name type="ordered locus">AHA_3520</name>
</gene>
<reference key="1">
    <citation type="journal article" date="2006" name="J. Bacteriol.">
        <title>Genome sequence of Aeromonas hydrophila ATCC 7966T: jack of all trades.</title>
        <authorList>
            <person name="Seshadri R."/>
            <person name="Joseph S.W."/>
            <person name="Chopra A.K."/>
            <person name="Sha J."/>
            <person name="Shaw J."/>
            <person name="Graf J."/>
            <person name="Haft D.H."/>
            <person name="Wu M."/>
            <person name="Ren Q."/>
            <person name="Rosovitz M.J."/>
            <person name="Madupu R."/>
            <person name="Tallon L."/>
            <person name="Kim M."/>
            <person name="Jin S."/>
            <person name="Vuong H."/>
            <person name="Stine O.C."/>
            <person name="Ali A."/>
            <person name="Horneman A.J."/>
            <person name="Heidelberg J.F."/>
        </authorList>
    </citation>
    <scope>NUCLEOTIDE SEQUENCE [LARGE SCALE GENOMIC DNA]</scope>
    <source>
        <strain>ATCC 7966 / DSM 30187 / BCRC 13018 / CCUG 14551 / JCM 1027 / KCTC 2358 / NCIMB 9240 / NCTC 8049</strain>
    </source>
</reference>